<organism>
    <name type="scientific">Mus musculus</name>
    <name type="common">Mouse</name>
    <dbReference type="NCBI Taxonomy" id="10090"/>
    <lineage>
        <taxon>Eukaryota</taxon>
        <taxon>Metazoa</taxon>
        <taxon>Chordata</taxon>
        <taxon>Craniata</taxon>
        <taxon>Vertebrata</taxon>
        <taxon>Euteleostomi</taxon>
        <taxon>Mammalia</taxon>
        <taxon>Eutheria</taxon>
        <taxon>Euarchontoglires</taxon>
        <taxon>Glires</taxon>
        <taxon>Rodentia</taxon>
        <taxon>Myomorpha</taxon>
        <taxon>Muroidea</taxon>
        <taxon>Muridae</taxon>
        <taxon>Murinae</taxon>
        <taxon>Mus</taxon>
        <taxon>Mus</taxon>
    </lineage>
</organism>
<gene>
    <name type="primary">Ap1b1</name>
    <name type="synonym">Adtb1</name>
</gene>
<evidence type="ECO:0000250" key="1"/>
<evidence type="ECO:0000250" key="2">
    <source>
        <dbReference type="UniProtKB" id="Q10567"/>
    </source>
</evidence>
<evidence type="ECO:0000256" key="3">
    <source>
        <dbReference type="SAM" id="MobiDB-lite"/>
    </source>
</evidence>
<evidence type="ECO:0000305" key="4"/>
<evidence type="ECO:0007744" key="5">
    <source>
    </source>
</evidence>
<reference key="1">
    <citation type="journal article" date="1997" name="Mamm. Genome">
        <title>Characterization of the mouse beta-prime adaptin gene; cDNA sequence, genomic structure, and chromosomal localization.</title>
        <authorList>
            <person name="Guilbaud C."/>
            <person name="Peyrard M."/>
            <person name="Fransson I."/>
            <person name="Clifton S.W."/>
            <person name="Roe B.A."/>
            <person name="Carter N.P."/>
            <person name="Dumanski J.P."/>
        </authorList>
    </citation>
    <scope>NUCLEOTIDE SEQUENCE [MRNA]</scope>
    <source>
        <strain>BALB/cJ</strain>
        <tissue>Embryonic brain</tissue>
    </source>
</reference>
<reference key="2">
    <citation type="journal article" date="2005" name="Science">
        <title>The transcriptional landscape of the mammalian genome.</title>
        <authorList>
            <person name="Carninci P."/>
            <person name="Kasukawa T."/>
            <person name="Katayama S."/>
            <person name="Gough J."/>
            <person name="Frith M.C."/>
            <person name="Maeda N."/>
            <person name="Oyama R."/>
            <person name="Ravasi T."/>
            <person name="Lenhard B."/>
            <person name="Wells C."/>
            <person name="Kodzius R."/>
            <person name="Shimokawa K."/>
            <person name="Bajic V.B."/>
            <person name="Brenner S.E."/>
            <person name="Batalov S."/>
            <person name="Forrest A.R."/>
            <person name="Zavolan M."/>
            <person name="Davis M.J."/>
            <person name="Wilming L.G."/>
            <person name="Aidinis V."/>
            <person name="Allen J.E."/>
            <person name="Ambesi-Impiombato A."/>
            <person name="Apweiler R."/>
            <person name="Aturaliya R.N."/>
            <person name="Bailey T.L."/>
            <person name="Bansal M."/>
            <person name="Baxter L."/>
            <person name="Beisel K.W."/>
            <person name="Bersano T."/>
            <person name="Bono H."/>
            <person name="Chalk A.M."/>
            <person name="Chiu K.P."/>
            <person name="Choudhary V."/>
            <person name="Christoffels A."/>
            <person name="Clutterbuck D.R."/>
            <person name="Crowe M.L."/>
            <person name="Dalla E."/>
            <person name="Dalrymple B.P."/>
            <person name="de Bono B."/>
            <person name="Della Gatta G."/>
            <person name="di Bernardo D."/>
            <person name="Down T."/>
            <person name="Engstrom P."/>
            <person name="Fagiolini M."/>
            <person name="Faulkner G."/>
            <person name="Fletcher C.F."/>
            <person name="Fukushima T."/>
            <person name="Furuno M."/>
            <person name="Futaki S."/>
            <person name="Gariboldi M."/>
            <person name="Georgii-Hemming P."/>
            <person name="Gingeras T.R."/>
            <person name="Gojobori T."/>
            <person name="Green R.E."/>
            <person name="Gustincich S."/>
            <person name="Harbers M."/>
            <person name="Hayashi Y."/>
            <person name="Hensch T.K."/>
            <person name="Hirokawa N."/>
            <person name="Hill D."/>
            <person name="Huminiecki L."/>
            <person name="Iacono M."/>
            <person name="Ikeo K."/>
            <person name="Iwama A."/>
            <person name="Ishikawa T."/>
            <person name="Jakt M."/>
            <person name="Kanapin A."/>
            <person name="Katoh M."/>
            <person name="Kawasawa Y."/>
            <person name="Kelso J."/>
            <person name="Kitamura H."/>
            <person name="Kitano H."/>
            <person name="Kollias G."/>
            <person name="Krishnan S.P."/>
            <person name="Kruger A."/>
            <person name="Kummerfeld S.K."/>
            <person name="Kurochkin I.V."/>
            <person name="Lareau L.F."/>
            <person name="Lazarevic D."/>
            <person name="Lipovich L."/>
            <person name="Liu J."/>
            <person name="Liuni S."/>
            <person name="McWilliam S."/>
            <person name="Madan Babu M."/>
            <person name="Madera M."/>
            <person name="Marchionni L."/>
            <person name="Matsuda H."/>
            <person name="Matsuzawa S."/>
            <person name="Miki H."/>
            <person name="Mignone F."/>
            <person name="Miyake S."/>
            <person name="Morris K."/>
            <person name="Mottagui-Tabar S."/>
            <person name="Mulder N."/>
            <person name="Nakano N."/>
            <person name="Nakauchi H."/>
            <person name="Ng P."/>
            <person name="Nilsson R."/>
            <person name="Nishiguchi S."/>
            <person name="Nishikawa S."/>
            <person name="Nori F."/>
            <person name="Ohara O."/>
            <person name="Okazaki Y."/>
            <person name="Orlando V."/>
            <person name="Pang K.C."/>
            <person name="Pavan W.J."/>
            <person name="Pavesi G."/>
            <person name="Pesole G."/>
            <person name="Petrovsky N."/>
            <person name="Piazza S."/>
            <person name="Reed J."/>
            <person name="Reid J.F."/>
            <person name="Ring B.Z."/>
            <person name="Ringwald M."/>
            <person name="Rost B."/>
            <person name="Ruan Y."/>
            <person name="Salzberg S.L."/>
            <person name="Sandelin A."/>
            <person name="Schneider C."/>
            <person name="Schoenbach C."/>
            <person name="Sekiguchi K."/>
            <person name="Semple C.A."/>
            <person name="Seno S."/>
            <person name="Sessa L."/>
            <person name="Sheng Y."/>
            <person name="Shibata Y."/>
            <person name="Shimada H."/>
            <person name="Shimada K."/>
            <person name="Silva D."/>
            <person name="Sinclair B."/>
            <person name="Sperling S."/>
            <person name="Stupka E."/>
            <person name="Sugiura K."/>
            <person name="Sultana R."/>
            <person name="Takenaka Y."/>
            <person name="Taki K."/>
            <person name="Tammoja K."/>
            <person name="Tan S.L."/>
            <person name="Tang S."/>
            <person name="Taylor M.S."/>
            <person name="Tegner J."/>
            <person name="Teichmann S.A."/>
            <person name="Ueda H.R."/>
            <person name="van Nimwegen E."/>
            <person name="Verardo R."/>
            <person name="Wei C.L."/>
            <person name="Yagi K."/>
            <person name="Yamanishi H."/>
            <person name="Zabarovsky E."/>
            <person name="Zhu S."/>
            <person name="Zimmer A."/>
            <person name="Hide W."/>
            <person name="Bult C."/>
            <person name="Grimmond S.M."/>
            <person name="Teasdale R.D."/>
            <person name="Liu E.T."/>
            <person name="Brusic V."/>
            <person name="Quackenbush J."/>
            <person name="Wahlestedt C."/>
            <person name="Mattick J.S."/>
            <person name="Hume D.A."/>
            <person name="Kai C."/>
            <person name="Sasaki D."/>
            <person name="Tomaru Y."/>
            <person name="Fukuda S."/>
            <person name="Kanamori-Katayama M."/>
            <person name="Suzuki M."/>
            <person name="Aoki J."/>
            <person name="Arakawa T."/>
            <person name="Iida J."/>
            <person name="Imamura K."/>
            <person name="Itoh M."/>
            <person name="Kato T."/>
            <person name="Kawaji H."/>
            <person name="Kawagashira N."/>
            <person name="Kawashima T."/>
            <person name="Kojima M."/>
            <person name="Kondo S."/>
            <person name="Konno H."/>
            <person name="Nakano K."/>
            <person name="Ninomiya N."/>
            <person name="Nishio T."/>
            <person name="Okada M."/>
            <person name="Plessy C."/>
            <person name="Shibata K."/>
            <person name="Shiraki T."/>
            <person name="Suzuki S."/>
            <person name="Tagami M."/>
            <person name="Waki K."/>
            <person name="Watahiki A."/>
            <person name="Okamura-Oho Y."/>
            <person name="Suzuki H."/>
            <person name="Kawai J."/>
            <person name="Hayashizaki Y."/>
        </authorList>
    </citation>
    <scope>NUCLEOTIDE SEQUENCE [LARGE SCALE MRNA]</scope>
    <source>
        <strain>C57BL/6J</strain>
    </source>
</reference>
<reference key="3">
    <citation type="submission" date="2005-07" db="EMBL/GenBank/DDBJ databases">
        <authorList>
            <person name="Mural R.J."/>
            <person name="Adams M.D."/>
            <person name="Myers E.W."/>
            <person name="Smith H.O."/>
            <person name="Venter J.C."/>
        </authorList>
    </citation>
    <scope>NUCLEOTIDE SEQUENCE [LARGE SCALE GENOMIC DNA]</scope>
</reference>
<reference key="4">
    <citation type="journal article" date="2004" name="Genome Res.">
        <title>The status, quality, and expansion of the NIH full-length cDNA project: the Mammalian Gene Collection (MGC).</title>
        <authorList>
            <consortium name="The MGC Project Team"/>
        </authorList>
    </citation>
    <scope>NUCLEOTIDE SEQUENCE [LARGE SCALE MRNA]</scope>
    <source>
        <tissue>Mammary gland</tissue>
    </source>
</reference>
<reference key="5">
    <citation type="journal article" date="2006" name="Biochemistry">
        <title>Endogenously nitrated proteins in mouse brain: links to neurodegenerative disease.</title>
        <authorList>
            <person name="Sacksteder C.A."/>
            <person name="Qian W.-J."/>
            <person name="Knyushko T.V."/>
            <person name="Wang H."/>
            <person name="Chin M.H."/>
            <person name="Lacan G."/>
            <person name="Melega W.P."/>
            <person name="Camp D.G. II"/>
            <person name="Smith R.D."/>
            <person name="Smith D.J."/>
            <person name="Squier T.C."/>
            <person name="Bigelow D.J."/>
        </authorList>
    </citation>
    <scope>NITRATION [LARGE SCALE ANALYSIS] AT TYR-574</scope>
    <scope>IDENTIFICATION BY MASS SPECTROMETRY [LARGE SCALE ANALYSIS]</scope>
    <source>
        <tissue>Brain</tissue>
    </source>
</reference>
<reference key="6">
    <citation type="journal article" date="2010" name="Cell">
        <title>A tissue-specific atlas of mouse protein phosphorylation and expression.</title>
        <authorList>
            <person name="Huttlin E.L."/>
            <person name="Jedrychowski M.P."/>
            <person name="Elias J.E."/>
            <person name="Goswami T."/>
            <person name="Rad R."/>
            <person name="Beausoleil S.A."/>
            <person name="Villen J."/>
            <person name="Haas W."/>
            <person name="Sowa M.E."/>
            <person name="Gygi S.P."/>
        </authorList>
    </citation>
    <scope>IDENTIFICATION BY MASS SPECTROMETRY [LARGE SCALE ANALYSIS]</scope>
    <source>
        <tissue>Brain</tissue>
        <tissue>Brown adipose tissue</tissue>
        <tissue>Heart</tissue>
        <tissue>Kidney</tissue>
        <tissue>Liver</tissue>
        <tissue>Lung</tissue>
        <tissue>Pancreas</tissue>
        <tissue>Spleen</tissue>
        <tissue>Testis</tissue>
    </source>
</reference>
<protein>
    <recommendedName>
        <fullName>AP-1 complex subunit beta-1</fullName>
    </recommendedName>
    <alternativeName>
        <fullName>Adaptor protein complex AP-1 subunit beta-1</fullName>
    </alternativeName>
    <alternativeName>
        <fullName>Adaptor-related protein complex 1 subunit beta-1</fullName>
    </alternativeName>
    <alternativeName>
        <fullName>Beta-1-adaptin</fullName>
    </alternativeName>
    <alternativeName>
        <fullName>Beta-adaptin 1</fullName>
    </alternativeName>
    <alternativeName>
        <fullName>Clathrin assembly protein complex 1 beta large chain</fullName>
    </alternativeName>
    <alternativeName>
        <fullName>Golgi adaptor HA1/AP1 adaptin beta subunit</fullName>
    </alternativeName>
</protein>
<sequence>MTDSKYFTTTKKGEIFELKAELNSDKKEKKKEAVKKVIASMTVGKDVSALFPDVVNCMQTDNLELKKLVYLYLMNYAKSQPDMAIMAVNTFVKDCEDPNPLIRALAVRTMGCIRVDKITEYLCEPLRKCLKDEDPYVRKTAAVCVAKLHDINAQLVEDQGFLDTLKDLISDSNPMVVANAVAALSEIAESHPSSNLLDLNPQSINKLLTALNECTEWGQIFILDCLANYMPKDDREAQSICERVTPRLSHANSAVVLSAVKVLMKFMEMLSKDLDYYATLLKKLAPPLVTLLSAEPELQYVALRNINLIVQKRPEILKHEMKVFFVKYNDPIYVKLEKLDIMIRLASQANIAQVLAELKEYATEVDVDFVRKAVRAIGRCAIKVEQSAERCVSTLLDLIQTKVNYVVQEAIVVIKDIFRKYPNKYESVIATLCENLDSLDEPEARAAMIWIVGEYAERIDNADELLESFLEGFHDESTQVQLQLLTAIVKLFLKKPTETQELVQQVLSLATQDSDNPDLRDRGYIYWRLLSTDPVAAKEVVLAEKPLISEETDLIEPTLLDELICYIGTLASVYHKPPNAFVEGGRGVVHKSLPPRTASSESTESPETAPAGAPAGDQPDVIPAQGDLLGDLLNLDLGPPVSGPPLAASSVQMGAVDLLGGGLDSLIGDSNFGAPSASVAAAPAPARLGAPISSGLSDLFDLTSGVGTLSGSYVAPKAVWLPAMKAKGLEISGTFTRQAGSISMDLQLTNKALQVMTDFAIQFNRNSFGLAPAAPLQVHVPLSPNQTVEISLPLNTVGSVLKMEPLNNLQVAVKNNIDVFYFSTLYPLHVLFVEDGKMDRQMFLATWKDIANENEAQFQIRDCPLNTEAASNKLQSSNIFTVAKRNVEGQDMLYQSLKLTNGIWVLAELRIQPGNPSFTLSLKCRAPEVSQHVYQAYETILKN</sequence>
<accession>O35643</accession>
<accession>Q3TXG4</accession>
<accession>Q922E2</accession>
<keyword id="KW-0007">Acetylation</keyword>
<keyword id="KW-0968">Cytoplasmic vesicle</keyword>
<keyword id="KW-0333">Golgi apparatus</keyword>
<keyword id="KW-0472">Membrane</keyword>
<keyword id="KW-0944">Nitration</keyword>
<keyword id="KW-0653">Protein transport</keyword>
<keyword id="KW-1185">Reference proteome</keyword>
<keyword id="KW-0813">Transport</keyword>
<comment type="function">
    <text>Subunit of clathrin-associated adaptor protein complex 1 that plays a role in protein sorting in the late-Golgi/trans-Golgi network (TGN) and/or endosomes. The AP complexes mediate both the recruitment of clathrin to membranes and the recognition of sorting signals within the cytosolic tails of transmembrane cargo molecules.</text>
</comment>
<comment type="subunit">
    <text>Adaptor protein complex 1 (AP-1) is a heterotetramer composed of two large adaptins (gamma-type subunit AP1G1 and beta-type subunit AP1B1), a medium adaptin (mu-type subunit AP1M1 or AP1M2) and a small adaptin (sigma-type subunit AP1S1 or AP1S2 or AP1S3).</text>
</comment>
<comment type="subcellular location">
    <subcellularLocation>
        <location evidence="1">Cytoplasmic vesicle</location>
        <location evidence="1">Clathrin-coated vesicle membrane</location>
        <topology evidence="1">Peripheral membrane protein</topology>
        <orientation evidence="1">Cytoplasmic side</orientation>
    </subcellularLocation>
    <subcellularLocation>
        <location evidence="1">Golgi apparatus</location>
    </subcellularLocation>
    <text evidence="1">Component of the coat surrounding the cytoplasmic face of coated vesicles located at the Golgi complex.</text>
</comment>
<comment type="tissue specificity">
    <text>Widely expressed.</text>
</comment>
<comment type="similarity">
    <text evidence="4">Belongs to the adaptor complexes large subunit family.</text>
</comment>
<dbReference type="EMBL" id="Y07919">
    <property type="protein sequence ID" value="CAA69224.1"/>
    <property type="molecule type" value="mRNA"/>
</dbReference>
<dbReference type="EMBL" id="AK159273">
    <property type="protein sequence ID" value="BAE34952.1"/>
    <property type="molecule type" value="mRNA"/>
</dbReference>
<dbReference type="EMBL" id="CH466574">
    <property type="protein sequence ID" value="EDL40509.1"/>
    <property type="molecule type" value="Genomic_DNA"/>
</dbReference>
<dbReference type="EMBL" id="BC008513">
    <property type="protein sequence ID" value="AAH08513.1"/>
    <property type="molecule type" value="mRNA"/>
</dbReference>
<dbReference type="CCDS" id="CCDS36100.1"/>
<dbReference type="RefSeq" id="NP_031480.2">
    <property type="nucleotide sequence ID" value="NM_007454.4"/>
</dbReference>
<dbReference type="RefSeq" id="XP_030101349.1">
    <property type="nucleotide sequence ID" value="XM_030245489.2"/>
</dbReference>
<dbReference type="SMR" id="O35643"/>
<dbReference type="BioGRID" id="198122">
    <property type="interactions" value="39"/>
</dbReference>
<dbReference type="ComplexPortal" id="CPX-5141">
    <property type="entry name" value="Ubiquitous AP-1 Adaptor complex, sigma1a variant"/>
</dbReference>
<dbReference type="ComplexPortal" id="CPX-5142">
    <property type="entry name" value="Ubiquitous AP-1 Adaptor complex, sigma1b variant"/>
</dbReference>
<dbReference type="ComplexPortal" id="CPX-5143">
    <property type="entry name" value="Ubiquitous AP-1 Adaptor complex, sigma1c variant"/>
</dbReference>
<dbReference type="ComplexPortal" id="CPX-5144">
    <property type="entry name" value="Endothelial AP-1 Adaptor complex, sigma1a variant"/>
</dbReference>
<dbReference type="CORUM" id="O35643"/>
<dbReference type="FunCoup" id="O35643">
    <property type="interactions" value="3102"/>
</dbReference>
<dbReference type="IntAct" id="O35643">
    <property type="interactions" value="9"/>
</dbReference>
<dbReference type="MINT" id="O35643"/>
<dbReference type="STRING" id="10090.ENSMUSP00000009234"/>
<dbReference type="GlyGen" id="O35643">
    <property type="glycosylation" value="1 site, 1 O-linked glycan (1 site)"/>
</dbReference>
<dbReference type="iPTMnet" id="O35643"/>
<dbReference type="PhosphoSitePlus" id="O35643"/>
<dbReference type="SwissPalm" id="O35643"/>
<dbReference type="jPOST" id="O35643"/>
<dbReference type="PaxDb" id="10090-ENSMUSP00000009234"/>
<dbReference type="PeptideAtlas" id="O35643"/>
<dbReference type="ProteomicsDB" id="282131"/>
<dbReference type="Pumba" id="O35643"/>
<dbReference type="Antibodypedia" id="10350">
    <property type="antibodies" value="107 antibodies from 25 providers"/>
</dbReference>
<dbReference type="DNASU" id="11764"/>
<dbReference type="Ensembl" id="ENSMUST00000009234.16">
    <property type="protein sequence ID" value="ENSMUSP00000009234.10"/>
    <property type="gene ID" value="ENSMUSG00000009090.18"/>
</dbReference>
<dbReference type="GeneID" id="11764"/>
<dbReference type="KEGG" id="mmu:11764"/>
<dbReference type="UCSC" id="uc007hvo.2">
    <property type="organism name" value="mouse"/>
</dbReference>
<dbReference type="AGR" id="MGI:1096368"/>
<dbReference type="CTD" id="162"/>
<dbReference type="MGI" id="MGI:1096368">
    <property type="gene designation" value="Ap1b1"/>
</dbReference>
<dbReference type="VEuPathDB" id="HostDB:ENSMUSG00000009090"/>
<dbReference type="eggNOG" id="KOG1061">
    <property type="taxonomic scope" value="Eukaryota"/>
</dbReference>
<dbReference type="GeneTree" id="ENSGT00940000155991"/>
<dbReference type="InParanoid" id="O35643"/>
<dbReference type="OMA" id="NPPEVQW"/>
<dbReference type="OrthoDB" id="10254310at2759"/>
<dbReference type="PhylomeDB" id="O35643"/>
<dbReference type="TreeFam" id="TF300318"/>
<dbReference type="Reactome" id="R-MMU-2132295">
    <property type="pathway name" value="MHC class II antigen presentation"/>
</dbReference>
<dbReference type="Reactome" id="R-MMU-432720">
    <property type="pathway name" value="Lysosome Vesicle Biogenesis"/>
</dbReference>
<dbReference type="Reactome" id="R-MMU-432722">
    <property type="pathway name" value="Golgi Associated Vesicle Biogenesis"/>
</dbReference>
<dbReference type="BioGRID-ORCS" id="11764">
    <property type="hits" value="2 hits in 80 CRISPR screens"/>
</dbReference>
<dbReference type="CD-CODE" id="CE726F99">
    <property type="entry name" value="Postsynaptic density"/>
</dbReference>
<dbReference type="ChiTaRS" id="Ap1b1">
    <property type="organism name" value="mouse"/>
</dbReference>
<dbReference type="PRO" id="PR:O35643"/>
<dbReference type="Proteomes" id="UP000000589">
    <property type="component" value="Chromosome 11"/>
</dbReference>
<dbReference type="RNAct" id="O35643">
    <property type="molecule type" value="protein"/>
</dbReference>
<dbReference type="Bgee" id="ENSMUSG00000009090">
    <property type="expression patterns" value="Expressed in retinal neural layer and 262 other cell types or tissues"/>
</dbReference>
<dbReference type="ExpressionAtlas" id="O35643">
    <property type="expression patterns" value="baseline and differential"/>
</dbReference>
<dbReference type="GO" id="GO:0030121">
    <property type="term" value="C:AP-1 adaptor complex"/>
    <property type="evidence" value="ECO:0000303"/>
    <property type="project" value="ComplexPortal"/>
</dbReference>
<dbReference type="GO" id="GO:0005829">
    <property type="term" value="C:cytosol"/>
    <property type="evidence" value="ECO:0007669"/>
    <property type="project" value="Ensembl"/>
</dbReference>
<dbReference type="GO" id="GO:0005769">
    <property type="term" value="C:early endosome"/>
    <property type="evidence" value="ECO:0000303"/>
    <property type="project" value="ComplexPortal"/>
</dbReference>
<dbReference type="GO" id="GO:0005765">
    <property type="term" value="C:lysosomal membrane"/>
    <property type="evidence" value="ECO:0000303"/>
    <property type="project" value="ComplexPortal"/>
</dbReference>
<dbReference type="GO" id="GO:0008021">
    <property type="term" value="C:synaptic vesicle"/>
    <property type="evidence" value="ECO:0000314"/>
    <property type="project" value="SynGO"/>
</dbReference>
<dbReference type="GO" id="GO:0005802">
    <property type="term" value="C:trans-Golgi network"/>
    <property type="evidence" value="ECO:0000304"/>
    <property type="project" value="MGI"/>
</dbReference>
<dbReference type="GO" id="GO:0032588">
    <property type="term" value="C:trans-Golgi network membrane"/>
    <property type="evidence" value="ECO:0000303"/>
    <property type="project" value="ComplexPortal"/>
</dbReference>
<dbReference type="GO" id="GO:0030276">
    <property type="term" value="F:clathrin binding"/>
    <property type="evidence" value="ECO:0007669"/>
    <property type="project" value="InterPro"/>
</dbReference>
<dbReference type="GO" id="GO:0019901">
    <property type="term" value="F:protein kinase binding"/>
    <property type="evidence" value="ECO:0000353"/>
    <property type="project" value="ParkinsonsUK-UCL"/>
</dbReference>
<dbReference type="GO" id="GO:0110010">
    <property type="term" value="P:basolateral protein secretion"/>
    <property type="evidence" value="ECO:0000303"/>
    <property type="project" value="ComplexPortal"/>
</dbReference>
<dbReference type="GO" id="GO:0007368">
    <property type="term" value="P:determination of left/right symmetry"/>
    <property type="evidence" value="ECO:0000315"/>
    <property type="project" value="MGI"/>
</dbReference>
<dbReference type="GO" id="GO:0007507">
    <property type="term" value="P:heart development"/>
    <property type="evidence" value="ECO:0000315"/>
    <property type="project" value="MGI"/>
</dbReference>
<dbReference type="GO" id="GO:0006886">
    <property type="term" value="P:intracellular protein transport"/>
    <property type="evidence" value="ECO:0000304"/>
    <property type="project" value="MGI"/>
</dbReference>
<dbReference type="GO" id="GO:0001822">
    <property type="term" value="P:kidney development"/>
    <property type="evidence" value="ECO:0000315"/>
    <property type="project" value="MGI"/>
</dbReference>
<dbReference type="GO" id="GO:1903232">
    <property type="term" value="P:melanosome assembly"/>
    <property type="evidence" value="ECO:0000303"/>
    <property type="project" value="ComplexPortal"/>
</dbReference>
<dbReference type="GO" id="GO:0060155">
    <property type="term" value="P:platelet dense granule organization"/>
    <property type="evidence" value="ECO:0000303"/>
    <property type="project" value="ComplexPortal"/>
</dbReference>
<dbReference type="GO" id="GO:0016192">
    <property type="term" value="P:vesicle-mediated transport"/>
    <property type="evidence" value="ECO:0000304"/>
    <property type="project" value="MGI"/>
</dbReference>
<dbReference type="FunFam" id="1.25.10.10:FF:000002">
    <property type="entry name" value="AP complex subunit beta"/>
    <property type="match status" value="1"/>
</dbReference>
<dbReference type="FunFam" id="2.60.40.1150:FF:000001">
    <property type="entry name" value="AP complex subunit beta"/>
    <property type="match status" value="1"/>
</dbReference>
<dbReference type="FunFam" id="3.30.310.10:FF:000003">
    <property type="entry name" value="AP complex subunit beta"/>
    <property type="match status" value="1"/>
</dbReference>
<dbReference type="Gene3D" id="2.60.40.1150">
    <property type="match status" value="1"/>
</dbReference>
<dbReference type="Gene3D" id="1.25.10.10">
    <property type="entry name" value="Leucine-rich Repeat Variant"/>
    <property type="match status" value="1"/>
</dbReference>
<dbReference type="Gene3D" id="3.30.310.10">
    <property type="entry name" value="TATA-Binding Protein"/>
    <property type="match status" value="1"/>
</dbReference>
<dbReference type="InterPro" id="IPR026739">
    <property type="entry name" value="AP_beta"/>
</dbReference>
<dbReference type="InterPro" id="IPR016342">
    <property type="entry name" value="AP_complex_bsu_1_2_4"/>
</dbReference>
<dbReference type="InterPro" id="IPR011989">
    <property type="entry name" value="ARM-like"/>
</dbReference>
<dbReference type="InterPro" id="IPR016024">
    <property type="entry name" value="ARM-type_fold"/>
</dbReference>
<dbReference type="InterPro" id="IPR000225">
    <property type="entry name" value="Armadillo"/>
</dbReference>
<dbReference type="InterPro" id="IPR015151">
    <property type="entry name" value="B-adaptin_app_sub_C"/>
</dbReference>
<dbReference type="InterPro" id="IPR002553">
    <property type="entry name" value="Clathrin/coatomer_adapt-like_N"/>
</dbReference>
<dbReference type="InterPro" id="IPR008152">
    <property type="entry name" value="Clathrin_a/b/g-adaptin_app_Ig"/>
</dbReference>
<dbReference type="InterPro" id="IPR013041">
    <property type="entry name" value="Clathrin_app_Ig-like_sf"/>
</dbReference>
<dbReference type="InterPro" id="IPR013037">
    <property type="entry name" value="Clathrin_b-adaptin_app_Ig-like"/>
</dbReference>
<dbReference type="InterPro" id="IPR009028">
    <property type="entry name" value="Coatomer/calthrin_app_sub_C"/>
</dbReference>
<dbReference type="InterPro" id="IPR012295">
    <property type="entry name" value="TBP_dom_sf"/>
</dbReference>
<dbReference type="PANTHER" id="PTHR11134">
    <property type="entry name" value="ADAPTOR COMPLEX SUBUNIT BETA FAMILY MEMBER"/>
    <property type="match status" value="1"/>
</dbReference>
<dbReference type="Pfam" id="PF01602">
    <property type="entry name" value="Adaptin_N"/>
    <property type="match status" value="1"/>
</dbReference>
<dbReference type="Pfam" id="PF02883">
    <property type="entry name" value="Alpha_adaptinC2"/>
    <property type="match status" value="1"/>
</dbReference>
<dbReference type="Pfam" id="PF09066">
    <property type="entry name" value="B2-adapt-app_C"/>
    <property type="match status" value="1"/>
</dbReference>
<dbReference type="PIRSF" id="PIRSF002291">
    <property type="entry name" value="AP_complex_beta"/>
    <property type="match status" value="1"/>
</dbReference>
<dbReference type="SMART" id="SM00809">
    <property type="entry name" value="Alpha_adaptinC2"/>
    <property type="match status" value="1"/>
</dbReference>
<dbReference type="SMART" id="SM00185">
    <property type="entry name" value="ARM"/>
    <property type="match status" value="2"/>
</dbReference>
<dbReference type="SMART" id="SM01020">
    <property type="entry name" value="B2-adapt-app_C"/>
    <property type="match status" value="1"/>
</dbReference>
<dbReference type="SUPFAM" id="SSF48371">
    <property type="entry name" value="ARM repeat"/>
    <property type="match status" value="1"/>
</dbReference>
<dbReference type="SUPFAM" id="SSF49348">
    <property type="entry name" value="Clathrin adaptor appendage domain"/>
    <property type="match status" value="1"/>
</dbReference>
<dbReference type="SUPFAM" id="SSF55711">
    <property type="entry name" value="Subdomain of clathrin and coatomer appendage domain"/>
    <property type="match status" value="1"/>
</dbReference>
<name>AP1B1_MOUSE</name>
<proteinExistence type="evidence at protein level"/>
<feature type="chain" id="PRO_0000193739" description="AP-1 complex subunit beta-1">
    <location>
        <begin position="1"/>
        <end position="943"/>
    </location>
</feature>
<feature type="region of interest" description="Disordered" evidence="3">
    <location>
        <begin position="584"/>
        <end position="621"/>
    </location>
</feature>
<feature type="compositionally biased region" description="Low complexity" evidence="3">
    <location>
        <begin position="594"/>
        <end position="616"/>
    </location>
</feature>
<feature type="modified residue" description="N6-acetyllysine" evidence="2">
    <location>
        <position position="318"/>
    </location>
</feature>
<feature type="modified residue" description="3'-nitrotyrosine" evidence="5">
    <location>
        <position position="574"/>
    </location>
</feature>
<feature type="sequence conflict" description="In Ref. 1; CAA69224." evidence="4" ref="1">
    <original>A</original>
    <variation>D</variation>
    <location>
        <position position="227"/>
    </location>
</feature>
<feature type="sequence conflict" description="In Ref. 4; AAH08513." evidence="4" ref="4">
    <original>L</original>
    <variation>P</variation>
    <location>
        <position position="288"/>
    </location>
</feature>